<evidence type="ECO:0000255" key="1">
    <source>
        <dbReference type="PROSITE-ProRule" id="PRU00267"/>
    </source>
</evidence>
<evidence type="ECO:0000256" key="2">
    <source>
        <dbReference type="SAM" id="MobiDB-lite"/>
    </source>
</evidence>
<evidence type="ECO:0000269" key="3">
    <source>
    </source>
</evidence>
<evidence type="ECO:0000305" key="4"/>
<evidence type="ECO:0007744" key="5">
    <source>
    </source>
</evidence>
<dbReference type="EMBL" id="X71622">
    <property type="protein sequence ID" value="CAB37853.1"/>
    <property type="molecule type" value="Genomic_DNA"/>
</dbReference>
<dbReference type="EMBL" id="L16900">
    <property type="protein sequence ID" value="AAA02859.1"/>
    <property type="molecule type" value="Unassigned_DNA"/>
</dbReference>
<dbReference type="EMBL" id="Z28032">
    <property type="protein sequence ID" value="CAA81867.1"/>
    <property type="molecule type" value="Genomic_DNA"/>
</dbReference>
<dbReference type="EMBL" id="BK006944">
    <property type="protein sequence ID" value="DAA09124.1"/>
    <property type="molecule type" value="Genomic_DNA"/>
</dbReference>
<dbReference type="PIR" id="S37849">
    <property type="entry name" value="S37849"/>
</dbReference>
<dbReference type="RefSeq" id="NP_012893.3">
    <property type="nucleotide sequence ID" value="NM_001179598.3"/>
</dbReference>
<dbReference type="SMR" id="P33417"/>
<dbReference type="BioGRID" id="34101">
    <property type="interactions" value="590"/>
</dbReference>
<dbReference type="FunCoup" id="P33417">
    <property type="interactions" value="2372"/>
</dbReference>
<dbReference type="IntAct" id="P33417">
    <property type="interactions" value="53"/>
</dbReference>
<dbReference type="STRING" id="4932.YKL032C"/>
<dbReference type="iPTMnet" id="P33417"/>
<dbReference type="PaxDb" id="4932-YKL032C"/>
<dbReference type="PeptideAtlas" id="P33417"/>
<dbReference type="EnsemblFungi" id="YKL032C_mRNA">
    <property type="protein sequence ID" value="YKL032C"/>
    <property type="gene ID" value="YKL032C"/>
</dbReference>
<dbReference type="GeneID" id="853836"/>
<dbReference type="KEGG" id="sce:YKL032C"/>
<dbReference type="AGR" id="SGD:S000001515"/>
<dbReference type="SGD" id="S000001515">
    <property type="gene designation" value="IXR1"/>
</dbReference>
<dbReference type="VEuPathDB" id="FungiDB:YKL032C"/>
<dbReference type="eggNOG" id="KOG0381">
    <property type="taxonomic scope" value="Eukaryota"/>
</dbReference>
<dbReference type="HOGENOM" id="CLU_032670_1_0_1"/>
<dbReference type="InParanoid" id="P33417"/>
<dbReference type="OMA" id="KPFYEEF"/>
<dbReference type="OrthoDB" id="5550281at2759"/>
<dbReference type="BioCyc" id="YEAST:G3O-31835-MONOMER"/>
<dbReference type="Reactome" id="R-SCE-140342">
    <property type="pathway name" value="Apoptosis induced DNA fragmentation"/>
</dbReference>
<dbReference type="Reactome" id="R-SCE-163282">
    <property type="pathway name" value="Mitochondrial transcription initiation"/>
</dbReference>
<dbReference type="Reactome" id="R-SCE-5620971">
    <property type="pathway name" value="Pyroptosis"/>
</dbReference>
<dbReference type="Reactome" id="R-SCE-5686938">
    <property type="pathway name" value="Regulation of TLR by endogenous ligand"/>
</dbReference>
<dbReference type="Reactome" id="R-SCE-6798695">
    <property type="pathway name" value="Neutrophil degranulation"/>
</dbReference>
<dbReference type="Reactome" id="R-SCE-9837999">
    <property type="pathway name" value="Mitochondrial protein degradation"/>
</dbReference>
<dbReference type="BioGRID-ORCS" id="853836">
    <property type="hits" value="2 hits in 10 CRISPR screens"/>
</dbReference>
<dbReference type="PRO" id="PR:P33417"/>
<dbReference type="Proteomes" id="UP000002311">
    <property type="component" value="Chromosome XI"/>
</dbReference>
<dbReference type="RNAct" id="P33417">
    <property type="molecule type" value="protein"/>
</dbReference>
<dbReference type="GO" id="GO:0000785">
    <property type="term" value="C:chromatin"/>
    <property type="evidence" value="ECO:0000314"/>
    <property type="project" value="SGD"/>
</dbReference>
<dbReference type="GO" id="GO:0005634">
    <property type="term" value="C:nucleus"/>
    <property type="evidence" value="ECO:0007669"/>
    <property type="project" value="UniProtKB-SubCell"/>
</dbReference>
<dbReference type="GO" id="GO:0001046">
    <property type="term" value="F:core promoter sequence-specific DNA binding"/>
    <property type="evidence" value="ECO:0000314"/>
    <property type="project" value="SGD"/>
</dbReference>
<dbReference type="GO" id="GO:0003684">
    <property type="term" value="F:damaged DNA binding"/>
    <property type="evidence" value="ECO:0000314"/>
    <property type="project" value="SGD"/>
</dbReference>
<dbReference type="GO" id="GO:0043565">
    <property type="term" value="F:sequence-specific DNA binding"/>
    <property type="evidence" value="ECO:0000314"/>
    <property type="project" value="SGD"/>
</dbReference>
<dbReference type="GO" id="GO:0071456">
    <property type="term" value="P:cellular response to hypoxia"/>
    <property type="evidence" value="ECO:0000315"/>
    <property type="project" value="SGD"/>
</dbReference>
<dbReference type="GO" id="GO:0000122">
    <property type="term" value="P:negative regulation of transcription by RNA polymerase II"/>
    <property type="evidence" value="ECO:0000315"/>
    <property type="project" value="SGD"/>
</dbReference>
<dbReference type="GO" id="GO:2000819">
    <property type="term" value="P:regulation of nucleotide-excision repair"/>
    <property type="evidence" value="ECO:0000316"/>
    <property type="project" value="SGD"/>
</dbReference>
<dbReference type="GO" id="GO:0090069">
    <property type="term" value="P:regulation of ribosome biogenesis"/>
    <property type="evidence" value="ECO:0000315"/>
    <property type="project" value="SGD"/>
</dbReference>
<dbReference type="CDD" id="cd22012">
    <property type="entry name" value="HMG-box_ABF2_IXR1-like_rpt2"/>
    <property type="match status" value="1"/>
</dbReference>
<dbReference type="CDD" id="cd22011">
    <property type="entry name" value="HMG-box_IXR1-like_rpt1"/>
    <property type="match status" value="1"/>
</dbReference>
<dbReference type="FunFam" id="1.10.30.10:FF:000058">
    <property type="entry name" value="IXR1p Transcriptional repressor"/>
    <property type="match status" value="1"/>
</dbReference>
<dbReference type="FunFam" id="1.10.30.10:FF:000079">
    <property type="entry name" value="IXR1p Transcriptional repressor"/>
    <property type="match status" value="1"/>
</dbReference>
<dbReference type="Gene3D" id="1.10.30.10">
    <property type="entry name" value="High mobility group box domain"/>
    <property type="match status" value="2"/>
</dbReference>
<dbReference type="InterPro" id="IPR009071">
    <property type="entry name" value="HMG_box_dom"/>
</dbReference>
<dbReference type="InterPro" id="IPR036910">
    <property type="entry name" value="HMG_box_dom_sf"/>
</dbReference>
<dbReference type="InterPro" id="IPR050342">
    <property type="entry name" value="HMGB"/>
</dbReference>
<dbReference type="PANTHER" id="PTHR48112">
    <property type="entry name" value="HIGH MOBILITY GROUP PROTEIN DSP1"/>
    <property type="match status" value="1"/>
</dbReference>
<dbReference type="PANTHER" id="PTHR48112:SF22">
    <property type="entry name" value="MITOCHONDRIAL TRANSCRIPTION FACTOR A, ISOFORM B"/>
    <property type="match status" value="1"/>
</dbReference>
<dbReference type="Pfam" id="PF00505">
    <property type="entry name" value="HMG_box"/>
    <property type="match status" value="2"/>
</dbReference>
<dbReference type="SMART" id="SM00398">
    <property type="entry name" value="HMG"/>
    <property type="match status" value="2"/>
</dbReference>
<dbReference type="SUPFAM" id="SSF47095">
    <property type="entry name" value="HMG-box"/>
    <property type="match status" value="2"/>
</dbReference>
<dbReference type="PROSITE" id="PS50118">
    <property type="entry name" value="HMG_BOX_2"/>
    <property type="match status" value="2"/>
</dbReference>
<organism>
    <name type="scientific">Saccharomyces cerevisiae (strain ATCC 204508 / S288c)</name>
    <name type="common">Baker's yeast</name>
    <dbReference type="NCBI Taxonomy" id="559292"/>
    <lineage>
        <taxon>Eukaryota</taxon>
        <taxon>Fungi</taxon>
        <taxon>Dikarya</taxon>
        <taxon>Ascomycota</taxon>
        <taxon>Saccharomycotina</taxon>
        <taxon>Saccharomycetes</taxon>
        <taxon>Saccharomycetales</taxon>
        <taxon>Saccharomycetaceae</taxon>
        <taxon>Saccharomyces</taxon>
    </lineage>
</organism>
<gene>
    <name type="primary">IXR1</name>
    <name type="synonym">ORD1</name>
    <name type="ordered locus">YKL032C</name>
    <name type="ORF">YKL245</name>
</gene>
<comment type="function">
    <text>Binds to platinated DNA and confers sensitivity to the anticancer drug cisplatin. Activate the expression of the COX5B gene.</text>
</comment>
<comment type="subcellular location">
    <subcellularLocation>
        <location evidence="1 3">Nucleus</location>
    </subcellularLocation>
</comment>
<accession>P33417</accession>
<accession>D6VXQ4</accession>
<sequence length="597" mass="67856">MNTGISPKQDDASNSNLLNIGQDHSLQYQGLEHNDSQYRDASHQTPHQYLNQFQAQPQQQQQQQQQQQQQQQQAPYQGHFQQSPQQQQQNVYYPLPPQSLTQPTSQSQQQQQQQQQQQYANSNSNSNNNVNVNALPQDFGYMQQTGSGQNYPTINQQQFSEFYNSFLSHLTQKQTNPSVTGTGASSNNNSNNNNVSSGNNSTSSNPAQLAASQLNPATAAAAAANNAAGPASYLSQLPQVQRYYPNNMNALSSLLDPSSAGNAAGNANTATHPGLLPPNLQPQLTHHQQQMQQQLQLQQQQQLQQQQQLQQQHQLQQQQQLQQQHHHLQQQQQQQQHPVVKKLSSTQSRIERRKQLKKQGPKRPSSAYFLFSMSIRNELLQQFPEAKVPELSKLASARWKELTDDQKKPFYEEFRTNWEKYRVVRDAYEKTLPPKRPSGPFIQFTQEIRPTVVKENPDKGLIEITKIIGERWRELDPAKKAEYTETYKKRLKEWESCYPDENDPNGNPTGHSHKAMNMNLNMDTKIMENQDSIEHITANAIDSVTGSNSNSTNPNTPVSPPISLQQQPLQQQQQQQQQQQHMLLADPTTNGSIIKNE</sequence>
<feature type="chain" id="PRO_0000048573" description="Intrastrand cross-link recognition protein">
    <location>
        <begin position="1"/>
        <end position="597"/>
    </location>
</feature>
<feature type="DNA-binding region" description="HMG box 1" evidence="1">
    <location>
        <begin position="361"/>
        <end position="429"/>
    </location>
</feature>
<feature type="DNA-binding region" description="HMG box 2" evidence="1">
    <location>
        <begin position="434"/>
        <end position="502"/>
    </location>
</feature>
<feature type="region of interest" description="Disordered" evidence="2">
    <location>
        <begin position="1"/>
        <end position="134"/>
    </location>
</feature>
<feature type="region of interest" description="Disordered" evidence="2">
    <location>
        <begin position="174"/>
        <end position="212"/>
    </location>
</feature>
<feature type="region of interest" description="Disordered" evidence="2">
    <location>
        <begin position="259"/>
        <end position="291"/>
    </location>
</feature>
<feature type="region of interest" description="Disordered" evidence="2">
    <location>
        <begin position="327"/>
        <end position="364"/>
    </location>
</feature>
<feature type="region of interest" description="Disordered" evidence="2">
    <location>
        <begin position="543"/>
        <end position="597"/>
    </location>
</feature>
<feature type="compositionally biased region" description="Polar residues" evidence="2">
    <location>
        <begin position="1"/>
        <end position="28"/>
    </location>
</feature>
<feature type="compositionally biased region" description="Basic and acidic residues" evidence="2">
    <location>
        <begin position="32"/>
        <end position="42"/>
    </location>
</feature>
<feature type="compositionally biased region" description="Low complexity" evidence="2">
    <location>
        <begin position="52"/>
        <end position="134"/>
    </location>
</feature>
<feature type="compositionally biased region" description="Low complexity" evidence="2">
    <location>
        <begin position="178"/>
        <end position="212"/>
    </location>
</feature>
<feature type="compositionally biased region" description="Low complexity" evidence="2">
    <location>
        <begin position="260"/>
        <end position="271"/>
    </location>
</feature>
<feature type="compositionally biased region" description="Low complexity" evidence="2">
    <location>
        <begin position="281"/>
        <end position="291"/>
    </location>
</feature>
<feature type="compositionally biased region" description="Low complexity" evidence="2">
    <location>
        <begin position="327"/>
        <end position="337"/>
    </location>
</feature>
<feature type="compositionally biased region" description="Basic residues" evidence="2">
    <location>
        <begin position="351"/>
        <end position="361"/>
    </location>
</feature>
<feature type="compositionally biased region" description="Low complexity" evidence="2">
    <location>
        <begin position="543"/>
        <end position="556"/>
    </location>
</feature>
<feature type="compositionally biased region" description="Low complexity" evidence="2">
    <location>
        <begin position="564"/>
        <end position="580"/>
    </location>
</feature>
<feature type="compositionally biased region" description="Polar residues" evidence="2">
    <location>
        <begin position="587"/>
        <end position="597"/>
    </location>
</feature>
<feature type="modified residue" description="Phosphoserine" evidence="5">
    <location>
        <position position="532"/>
    </location>
</feature>
<feature type="sequence conflict" description="In Ref. 1; AAA02859." evidence="4" ref="1">
    <location>
        <position position="73"/>
    </location>
</feature>
<feature type="sequence conflict" description="In Ref. 1; AAA02859." evidence="4" ref="1">
    <original>Y</original>
    <variation>F</variation>
    <location>
        <position position="93"/>
    </location>
</feature>
<feature type="sequence conflict" description="In Ref. 1." evidence="4" ref="1">
    <location>
        <begin position="114"/>
        <end position="118"/>
    </location>
</feature>
<feature type="sequence conflict" description="In Ref. 1; AAA02859." evidence="4" ref="1">
    <original>A</original>
    <variation>T</variation>
    <location>
        <position position="207"/>
    </location>
</feature>
<feature type="sequence conflict" description="In Ref. 1; AAA02859." evidence="4" ref="1">
    <original>AA</original>
    <variation>TT</variation>
    <location>
        <begin position="220"/>
        <end position="221"/>
    </location>
</feature>
<proteinExistence type="evidence at protein level"/>
<name>IXR1_YEAST</name>
<reference key="1">
    <citation type="journal article" date="1993" name="Science">
        <title>Ixr1, a yeast protein that binds to platinated DNA and confers sensitivity to cisplatin.</title>
        <authorList>
            <person name="Brown S.J."/>
            <person name="Kellett P.J."/>
            <person name="Lippard S.J."/>
        </authorList>
    </citation>
    <scope>NUCLEOTIDE SEQUENCE [GENOMIC DNA]</scope>
    <source>
        <strain>ATCC 204508 / S288c</strain>
    </source>
</reference>
<reference key="2">
    <citation type="journal article" date="1994" name="Proc. Natl. Acad. Sci. U.S.A.">
        <title>The ORD1 gene encodes a transcription factor involved in oxygen regulation and is identical to IXR1, a gene that confers cisplatin sensitivity to Saccharomyces cerevisiae.</title>
        <authorList>
            <person name="Lambert J.R."/>
            <person name="Bilanchone V.W."/>
            <person name="Cumsky M.G."/>
        </authorList>
    </citation>
    <scope>NUCLEOTIDE SEQUENCE</scope>
</reference>
<reference key="3">
    <citation type="journal article" date="1994" name="Yeast">
        <title>Analysis of an 11.7 kb DNA fragment of chromosome XI reveals a new tRNA gene and four new open reading frames including a leucine zipper protein and a homologue to the yeast mitochondrial regulator ABF2.</title>
        <authorList>
            <person name="Purnelle B."/>
            <person name="Skala J."/>
            <person name="van Dyck L."/>
            <person name="Goffeau A."/>
        </authorList>
    </citation>
    <scope>NUCLEOTIDE SEQUENCE [GENOMIC DNA]</scope>
    <source>
        <strain>ATCC 204508 / S288c</strain>
    </source>
</reference>
<reference key="4">
    <citation type="journal article" date="1994" name="Nature">
        <title>Complete DNA sequence of yeast chromosome XI.</title>
        <authorList>
            <person name="Dujon B."/>
            <person name="Alexandraki D."/>
            <person name="Andre B."/>
            <person name="Ansorge W."/>
            <person name="Baladron V."/>
            <person name="Ballesta J.P.G."/>
            <person name="Banrevi A."/>
            <person name="Bolle P.-A."/>
            <person name="Bolotin-Fukuhara M."/>
            <person name="Bossier P."/>
            <person name="Bou G."/>
            <person name="Boyer J."/>
            <person name="Buitrago M.J."/>
            <person name="Cheret G."/>
            <person name="Colleaux L."/>
            <person name="Daignan-Fornier B."/>
            <person name="del Rey F."/>
            <person name="Dion C."/>
            <person name="Domdey H."/>
            <person name="Duesterhoeft A."/>
            <person name="Duesterhus S."/>
            <person name="Entian K.-D."/>
            <person name="Erfle H."/>
            <person name="Esteban P.F."/>
            <person name="Feldmann H."/>
            <person name="Fernandes L."/>
            <person name="Fobo G.M."/>
            <person name="Fritz C."/>
            <person name="Fukuhara H."/>
            <person name="Gabel C."/>
            <person name="Gaillon L."/>
            <person name="Garcia-Cantalejo J.M."/>
            <person name="Garcia-Ramirez J.J."/>
            <person name="Gent M.E."/>
            <person name="Ghazvini M."/>
            <person name="Goffeau A."/>
            <person name="Gonzalez A."/>
            <person name="Grothues D."/>
            <person name="Guerreiro P."/>
            <person name="Hegemann J.H."/>
            <person name="Hewitt N."/>
            <person name="Hilger F."/>
            <person name="Hollenberg C.P."/>
            <person name="Horaitis O."/>
            <person name="Indge K.J."/>
            <person name="Jacquier A."/>
            <person name="James C.M."/>
            <person name="Jauniaux J.-C."/>
            <person name="Jimenez A."/>
            <person name="Keuchel H."/>
            <person name="Kirchrath L."/>
            <person name="Kleine K."/>
            <person name="Koetter P."/>
            <person name="Legrain P."/>
            <person name="Liebl S."/>
            <person name="Louis E.J."/>
            <person name="Maia e Silva A."/>
            <person name="Marck C."/>
            <person name="Monnier A.-L."/>
            <person name="Moestl D."/>
            <person name="Mueller S."/>
            <person name="Obermaier B."/>
            <person name="Oliver S.G."/>
            <person name="Pallier C."/>
            <person name="Pascolo S."/>
            <person name="Pfeiffer F."/>
            <person name="Philippsen P."/>
            <person name="Planta R.J."/>
            <person name="Pohl F.M."/>
            <person name="Pohl T.M."/>
            <person name="Poehlmann R."/>
            <person name="Portetelle D."/>
            <person name="Purnelle B."/>
            <person name="Puzos V."/>
            <person name="Ramezani Rad M."/>
            <person name="Rasmussen S.W."/>
            <person name="Remacha M.A."/>
            <person name="Revuelta J.L."/>
            <person name="Richard G.-F."/>
            <person name="Rieger M."/>
            <person name="Rodrigues-Pousada C."/>
            <person name="Rose M."/>
            <person name="Rupp T."/>
            <person name="Santos M.A."/>
            <person name="Schwager C."/>
            <person name="Sensen C."/>
            <person name="Skala J."/>
            <person name="Soares H."/>
            <person name="Sor F."/>
            <person name="Stegemann J."/>
            <person name="Tettelin H."/>
            <person name="Thierry A."/>
            <person name="Tzermia M."/>
            <person name="Urrestarazu L.A."/>
            <person name="van Dyck L."/>
            <person name="van Vliet-Reedijk J.C."/>
            <person name="Valens M."/>
            <person name="Vandenbol M."/>
            <person name="Vilela C."/>
            <person name="Vissers S."/>
            <person name="von Wettstein D."/>
            <person name="Voss H."/>
            <person name="Wiemann S."/>
            <person name="Xu G."/>
            <person name="Zimmermann J."/>
            <person name="Haasemann M."/>
            <person name="Becker I."/>
            <person name="Mewes H.-W."/>
        </authorList>
    </citation>
    <scope>NUCLEOTIDE SEQUENCE [LARGE SCALE GENOMIC DNA]</scope>
    <source>
        <strain>ATCC 204508 / S288c</strain>
    </source>
</reference>
<reference key="5">
    <citation type="journal article" date="2014" name="G3 (Bethesda)">
        <title>The reference genome sequence of Saccharomyces cerevisiae: Then and now.</title>
        <authorList>
            <person name="Engel S.R."/>
            <person name="Dietrich F.S."/>
            <person name="Fisk D.G."/>
            <person name="Binkley G."/>
            <person name="Balakrishnan R."/>
            <person name="Costanzo M.C."/>
            <person name="Dwight S.S."/>
            <person name="Hitz B.C."/>
            <person name="Karra K."/>
            <person name="Nash R.S."/>
            <person name="Weng S."/>
            <person name="Wong E.D."/>
            <person name="Lloyd P."/>
            <person name="Skrzypek M.S."/>
            <person name="Miyasato S.R."/>
            <person name="Simison M."/>
            <person name="Cherry J.M."/>
        </authorList>
    </citation>
    <scope>GENOME REANNOTATION</scope>
    <source>
        <strain>ATCC 204508 / S288c</strain>
    </source>
</reference>
<reference key="6">
    <citation type="journal article" date="2003" name="Nature">
        <title>Global analysis of protein localization in budding yeast.</title>
        <authorList>
            <person name="Huh W.-K."/>
            <person name="Falvo J.V."/>
            <person name="Gerke L.C."/>
            <person name="Carroll A.S."/>
            <person name="Howson R.W."/>
            <person name="Weissman J.S."/>
            <person name="O'Shea E.K."/>
        </authorList>
    </citation>
    <scope>SUBCELLULAR LOCATION [LARGE SCALE ANALYSIS]</scope>
</reference>
<reference key="7">
    <citation type="journal article" date="2008" name="Mol. Cell. Proteomics">
        <title>A multidimensional chromatography technology for in-depth phosphoproteome analysis.</title>
        <authorList>
            <person name="Albuquerque C.P."/>
            <person name="Smolka M.B."/>
            <person name="Payne S.H."/>
            <person name="Bafna V."/>
            <person name="Eng J."/>
            <person name="Zhou H."/>
        </authorList>
    </citation>
    <scope>PHOSPHORYLATION [LARGE SCALE ANALYSIS] AT SER-532</scope>
    <scope>IDENTIFICATION BY MASS SPECTROMETRY [LARGE SCALE ANALYSIS]</scope>
</reference>
<keyword id="KW-0010">Activator</keyword>
<keyword id="KW-0238">DNA-binding</keyword>
<keyword id="KW-0539">Nucleus</keyword>
<keyword id="KW-0597">Phosphoprotein</keyword>
<keyword id="KW-1185">Reference proteome</keyword>
<keyword id="KW-0677">Repeat</keyword>
<keyword id="KW-0804">Transcription</keyword>
<keyword id="KW-0805">Transcription regulation</keyword>
<protein>
    <recommendedName>
        <fullName>Intrastrand cross-link recognition protein</fullName>
    </recommendedName>
    <alternativeName>
        <fullName>Structure-specific recognition protein</fullName>
        <shortName>SSRP</shortName>
    </alternativeName>
</protein>